<dbReference type="EMBL" id="AJ277590">
    <property type="protein sequence ID" value="CAB97127.1"/>
    <property type="molecule type" value="Genomic_DNA"/>
</dbReference>
<dbReference type="EMBL" id="AAFI02000194">
    <property type="protein sequence ID" value="EAL61085.1"/>
    <property type="molecule type" value="Genomic_DNA"/>
</dbReference>
<dbReference type="RefSeq" id="XP_629509.1">
    <property type="nucleotide sequence ID" value="XM_629507.1"/>
</dbReference>
<dbReference type="FunCoup" id="Q9NA13">
    <property type="interactions" value="5"/>
</dbReference>
<dbReference type="STRING" id="44689.Q9NA13"/>
<dbReference type="GlyCosmos" id="Q9NA13">
    <property type="glycosylation" value="28 sites, No reported glycans"/>
</dbReference>
<dbReference type="GlyGen" id="Q9NA13">
    <property type="glycosylation" value="28 sites"/>
</dbReference>
<dbReference type="PaxDb" id="44689-DDB0201571"/>
<dbReference type="EnsemblProtists" id="EAL61085">
    <property type="protein sequence ID" value="EAL61085"/>
    <property type="gene ID" value="DDB_G0292564"/>
</dbReference>
<dbReference type="GeneID" id="8628760"/>
<dbReference type="KEGG" id="ddi:DDB_G0292564"/>
<dbReference type="dictyBase" id="DDB_G0292564">
    <property type="gene designation" value="iplA"/>
</dbReference>
<dbReference type="VEuPathDB" id="AmoebaDB:DDB_G0292564"/>
<dbReference type="eggNOG" id="KOG3533">
    <property type="taxonomic scope" value="Eukaryota"/>
</dbReference>
<dbReference type="HOGENOM" id="CLU_225557_0_0_1"/>
<dbReference type="InParanoid" id="Q9NA13"/>
<dbReference type="OMA" id="GRNYNGI"/>
<dbReference type="Reactome" id="R-DDI-114508">
    <property type="pathway name" value="Effects of PIP2 hydrolysis"/>
</dbReference>
<dbReference type="Reactome" id="R-DDI-139853">
    <property type="pathway name" value="Elevation of cytosolic Ca2+ levels"/>
</dbReference>
<dbReference type="Reactome" id="R-DDI-381676">
    <property type="pathway name" value="Glucagon-like Peptide-1 (GLP1) regulates insulin secretion"/>
</dbReference>
<dbReference type="Reactome" id="R-DDI-5578775">
    <property type="pathway name" value="Ion homeostasis"/>
</dbReference>
<dbReference type="Reactome" id="R-DDI-9717207">
    <property type="pathway name" value="Sensory perception of sweet, bitter, and umami (glutamate) taste"/>
</dbReference>
<dbReference type="PRO" id="PR:Q9NA13"/>
<dbReference type="Proteomes" id="UP000002195">
    <property type="component" value="Chromosome 6"/>
</dbReference>
<dbReference type="GO" id="GO:0030659">
    <property type="term" value="C:cytoplasmic vesicle membrane"/>
    <property type="evidence" value="ECO:0000314"/>
    <property type="project" value="dictyBase"/>
</dbReference>
<dbReference type="GO" id="GO:0005789">
    <property type="term" value="C:endoplasmic reticulum membrane"/>
    <property type="evidence" value="ECO:0007669"/>
    <property type="project" value="UniProtKB-SubCell"/>
</dbReference>
<dbReference type="GO" id="GO:0016020">
    <property type="term" value="C:membrane"/>
    <property type="evidence" value="ECO:0000250"/>
    <property type="project" value="dictyBase"/>
</dbReference>
<dbReference type="GO" id="GO:0005886">
    <property type="term" value="C:plasma membrane"/>
    <property type="evidence" value="ECO:0000314"/>
    <property type="project" value="dictyBase"/>
</dbReference>
<dbReference type="GO" id="GO:0005509">
    <property type="term" value="F:calcium ion binding"/>
    <property type="evidence" value="ECO:0000315"/>
    <property type="project" value="dictyBase"/>
</dbReference>
<dbReference type="GO" id="GO:0015085">
    <property type="term" value="F:calcium ion transmembrane transporter activity"/>
    <property type="evidence" value="ECO:0000250"/>
    <property type="project" value="dictyBase"/>
</dbReference>
<dbReference type="GO" id="GO:0070679">
    <property type="term" value="F:inositol 1,4,5 trisphosphate binding"/>
    <property type="evidence" value="ECO:0007669"/>
    <property type="project" value="InterPro"/>
</dbReference>
<dbReference type="GO" id="GO:0005220">
    <property type="term" value="F:inositol 1,4,5-trisphosphate-gated calcium channel activity"/>
    <property type="evidence" value="ECO:0007669"/>
    <property type="project" value="InterPro"/>
</dbReference>
<dbReference type="GO" id="GO:0031152">
    <property type="term" value="P:aggregation involved in sorocarp development"/>
    <property type="evidence" value="ECO:0000315"/>
    <property type="project" value="dictyBase"/>
</dbReference>
<dbReference type="GO" id="GO:0048102">
    <property type="term" value="P:autophagic cell death"/>
    <property type="evidence" value="ECO:0000315"/>
    <property type="project" value="dictyBase"/>
</dbReference>
<dbReference type="GO" id="GO:0032060">
    <property type="term" value="P:bleb assembly"/>
    <property type="evidence" value="ECO:0000315"/>
    <property type="project" value="dictyBase"/>
</dbReference>
<dbReference type="GO" id="GO:0006816">
    <property type="term" value="P:calcium ion transport"/>
    <property type="evidence" value="ECO:0000315"/>
    <property type="project" value="dictyBase"/>
</dbReference>
<dbReference type="GO" id="GO:0097231">
    <property type="term" value="P:cell motility in response to calcium ion"/>
    <property type="evidence" value="ECO:0000315"/>
    <property type="project" value="dictyBase"/>
</dbReference>
<dbReference type="GO" id="GO:0071260">
    <property type="term" value="P:cellular response to mechanical stimulus"/>
    <property type="evidence" value="ECO:0000315"/>
    <property type="project" value="dictyBase"/>
</dbReference>
<dbReference type="GO" id="GO:0030244">
    <property type="term" value="P:cellulose biosynthetic process"/>
    <property type="evidence" value="ECO:0000315"/>
    <property type="project" value="dictyBase"/>
</dbReference>
<dbReference type="GO" id="GO:0006935">
    <property type="term" value="P:chemotaxis"/>
    <property type="evidence" value="ECO:0000315"/>
    <property type="project" value="dictyBase"/>
</dbReference>
<dbReference type="GO" id="GO:0034670">
    <property type="term" value="P:chemotaxis to arachidonate"/>
    <property type="evidence" value="ECO:0000315"/>
    <property type="project" value="dictyBase"/>
</dbReference>
<dbReference type="GO" id="GO:0140986">
    <property type="term" value="P:G protein-coupled chemorepellent receptor signaling pathway"/>
    <property type="evidence" value="ECO:0000315"/>
    <property type="project" value="dictyBase"/>
</dbReference>
<dbReference type="GO" id="GO:1903665">
    <property type="term" value="P:negative regulation of asexual reproduction"/>
    <property type="evidence" value="ECO:0000315"/>
    <property type="project" value="dictyBase"/>
</dbReference>
<dbReference type="GO" id="GO:0051209">
    <property type="term" value="P:release of sequestered calcium ion into cytosol"/>
    <property type="evidence" value="ECO:0000315"/>
    <property type="project" value="dictyBase"/>
</dbReference>
<dbReference type="Gene3D" id="1.10.287.70">
    <property type="match status" value="1"/>
</dbReference>
<dbReference type="Gene3D" id="2.80.10.50">
    <property type="match status" value="2"/>
</dbReference>
<dbReference type="InterPro" id="IPR016024">
    <property type="entry name" value="ARM-type_fold"/>
</dbReference>
<dbReference type="InterPro" id="IPR000493">
    <property type="entry name" value="InsP3_rcpt"/>
</dbReference>
<dbReference type="InterPro" id="IPR013662">
    <property type="entry name" value="RIH_assoc-dom"/>
</dbReference>
<dbReference type="InterPro" id="IPR000699">
    <property type="entry name" value="RIH_dom"/>
</dbReference>
<dbReference type="InterPro" id="IPR015925">
    <property type="entry name" value="Ryanodine_IP3_receptor"/>
</dbReference>
<dbReference type="InterPro" id="IPR035910">
    <property type="entry name" value="RyR/IP3R_RIH_dom_sf"/>
</dbReference>
<dbReference type="PANTHER" id="PTHR13715:SF99">
    <property type="entry name" value="INOSITOL 1,4,5-TRISPHOSPHATE RECEPTOR-LIKE PROTEIN A"/>
    <property type="match status" value="1"/>
</dbReference>
<dbReference type="PANTHER" id="PTHR13715">
    <property type="entry name" value="RYANODINE RECEPTOR AND IP3 RECEPTOR"/>
    <property type="match status" value="1"/>
</dbReference>
<dbReference type="Pfam" id="PF08454">
    <property type="entry name" value="RIH_assoc"/>
    <property type="match status" value="1"/>
</dbReference>
<dbReference type="Pfam" id="PF01365">
    <property type="entry name" value="RYDR_ITPR"/>
    <property type="match status" value="2"/>
</dbReference>
<dbReference type="PRINTS" id="PR00779">
    <property type="entry name" value="INSP3RECEPTR"/>
</dbReference>
<dbReference type="SUPFAM" id="SSF48371">
    <property type="entry name" value="ARM repeat"/>
    <property type="match status" value="1"/>
</dbReference>
<dbReference type="SUPFAM" id="SSF100909">
    <property type="entry name" value="IP3 receptor type 1 binding core, domain 2"/>
    <property type="match status" value="2"/>
</dbReference>
<proteinExistence type="evidence at transcript level"/>
<protein>
    <recommendedName>
        <fullName>Inositol 1,4,5-trisphosphate receptor-like protein A</fullName>
    </recommendedName>
</protein>
<comment type="function">
    <text evidence="4 5 6 7 8 9 10 12">May be a receptor for inositol 1,4,5 trisphosphate which governs calcium fluxes from the endoplasmic reticulum stores into the cytosol. May be involved in autophagic cell death.</text>
</comment>
<comment type="subcellular location">
    <subcellularLocation>
        <location evidence="13">Endoplasmic reticulum membrane</location>
        <topology evidence="13">Multi-pass membrane protein</topology>
    </subcellularLocation>
</comment>
<comment type="developmental stage">
    <text evidence="4">Expression is low during growth and rises to a peak at 9 hours of development when chemotactic aggregation to cyclic AMP is near its height; levels then decrease through the end of development.</text>
</comment>
<comment type="disruption phenotype">
    <text evidence="4 5 6 7 9 10 11 12">Null cells show abolition of calcium entry in response to chemoattractant, response to cyclic AMP and normal increase in free cytosolic calcium that follows chemotactic stimulation. Cells show formation of smaller fruiting bodies and abolition of autophagic cell death. Cells show absence of vacuolization.</text>
</comment>
<comment type="similarity">
    <text evidence="13">Belongs to the InsP3 receptor family.</text>
</comment>
<accession>Q9NA13</accession>
<accession>Q54D11</accession>
<reference key="1">
    <citation type="journal article" date="2000" name="EMBO J.">
        <title>Ca(2+) signalling is not required for chemotaxis in Dictyostelium.</title>
        <authorList>
            <person name="Traynor D."/>
            <person name="Milne J.L.S."/>
            <person name="Insall R.H."/>
            <person name="Kay R.R."/>
        </authorList>
    </citation>
    <scope>NUCLEOTIDE SEQUENCE [GENOMIC DNA]</scope>
    <scope>FUNCTION</scope>
    <scope>DISRUPTION PHENOTYPE</scope>
    <scope>DEVELOPMENTAL STAGE</scope>
    <source>
        <strain>AX2</strain>
    </source>
</reference>
<reference key="2">
    <citation type="journal article" date="2005" name="Nature">
        <title>The genome of the social amoeba Dictyostelium discoideum.</title>
        <authorList>
            <person name="Eichinger L."/>
            <person name="Pachebat J.A."/>
            <person name="Gloeckner G."/>
            <person name="Rajandream M.A."/>
            <person name="Sucgang R."/>
            <person name="Berriman M."/>
            <person name="Song J."/>
            <person name="Olsen R."/>
            <person name="Szafranski K."/>
            <person name="Xu Q."/>
            <person name="Tunggal B."/>
            <person name="Kummerfeld S."/>
            <person name="Madera M."/>
            <person name="Konfortov B.A."/>
            <person name="Rivero F."/>
            <person name="Bankier A.T."/>
            <person name="Lehmann R."/>
            <person name="Hamlin N."/>
            <person name="Davies R."/>
            <person name="Gaudet P."/>
            <person name="Fey P."/>
            <person name="Pilcher K."/>
            <person name="Chen G."/>
            <person name="Saunders D."/>
            <person name="Sodergren E.J."/>
            <person name="Davis P."/>
            <person name="Kerhornou A."/>
            <person name="Nie X."/>
            <person name="Hall N."/>
            <person name="Anjard C."/>
            <person name="Hemphill L."/>
            <person name="Bason N."/>
            <person name="Farbrother P."/>
            <person name="Desany B."/>
            <person name="Just E."/>
            <person name="Morio T."/>
            <person name="Rost R."/>
            <person name="Churcher C.M."/>
            <person name="Cooper J."/>
            <person name="Haydock S."/>
            <person name="van Driessche N."/>
            <person name="Cronin A."/>
            <person name="Goodhead I."/>
            <person name="Muzny D.M."/>
            <person name="Mourier T."/>
            <person name="Pain A."/>
            <person name="Lu M."/>
            <person name="Harper D."/>
            <person name="Lindsay R."/>
            <person name="Hauser H."/>
            <person name="James K.D."/>
            <person name="Quiles M."/>
            <person name="Madan Babu M."/>
            <person name="Saito T."/>
            <person name="Buchrieser C."/>
            <person name="Wardroper A."/>
            <person name="Felder M."/>
            <person name="Thangavelu M."/>
            <person name="Johnson D."/>
            <person name="Knights A."/>
            <person name="Loulseged H."/>
            <person name="Mungall K.L."/>
            <person name="Oliver K."/>
            <person name="Price C."/>
            <person name="Quail M.A."/>
            <person name="Urushihara H."/>
            <person name="Hernandez J."/>
            <person name="Rabbinowitsch E."/>
            <person name="Steffen D."/>
            <person name="Sanders M."/>
            <person name="Ma J."/>
            <person name="Kohara Y."/>
            <person name="Sharp S."/>
            <person name="Simmonds M.N."/>
            <person name="Spiegler S."/>
            <person name="Tivey A."/>
            <person name="Sugano S."/>
            <person name="White B."/>
            <person name="Walker D."/>
            <person name="Woodward J.R."/>
            <person name="Winckler T."/>
            <person name="Tanaka Y."/>
            <person name="Shaulsky G."/>
            <person name="Schleicher M."/>
            <person name="Weinstock G.M."/>
            <person name="Rosenthal A."/>
            <person name="Cox E.C."/>
            <person name="Chisholm R.L."/>
            <person name="Gibbs R.A."/>
            <person name="Loomis W.F."/>
            <person name="Platzer M."/>
            <person name="Kay R.R."/>
            <person name="Williams J.G."/>
            <person name="Dear P.H."/>
            <person name="Noegel A.A."/>
            <person name="Barrell B.G."/>
            <person name="Kuspa A."/>
        </authorList>
    </citation>
    <scope>NUCLEOTIDE SEQUENCE [LARGE SCALE GENOMIC DNA]</scope>
    <source>
        <strain>AX4</strain>
    </source>
</reference>
<reference key="3">
    <citation type="journal article" date="2002" name="Cell Motil. Cytoskeleton">
        <title>Myosin II dynamics in Dictyostelium: determinants for filament assembly and translocation to the cell cortex during chemoattractant responses.</title>
        <authorList>
            <person name="Levi S."/>
            <person name="Polyakov M.V."/>
            <person name="Egelhoff T.T."/>
        </authorList>
    </citation>
    <scope>FUNCTION</scope>
    <scope>DISRUPTION PHENOTYPE</scope>
</reference>
<reference key="4">
    <citation type="journal article" date="2005" name="BMC Cell Biol.">
        <title>Ca2+ regulation in the absence of the iplA gene product in Dictyostelium discoideum.</title>
        <authorList>
            <person name="Schaloske R.H."/>
            <person name="Lusche D.F."/>
            <person name="Bezares-Roder K."/>
            <person name="Happle K."/>
            <person name="Malchow D."/>
            <person name="Schlatterer C."/>
        </authorList>
    </citation>
    <scope>FUNCTION</scope>
    <scope>DISRUPTION PHENOTYPE</scope>
</reference>
<reference key="5">
    <citation type="journal article" date="2006" name="J. Cell Sci.">
        <title>Influx of extracellular Ca2+ is necessary for electrotaxis in Dictyostelium.</title>
        <authorList>
            <person name="Shanley L.J."/>
            <person name="Walczysko P."/>
            <person name="Bain M."/>
            <person name="MacEwan D.J."/>
            <person name="Zhao M."/>
        </authorList>
    </citation>
    <scope>FUNCTION</scope>
    <scope>DISRUPTION PHENOTYPE</scope>
</reference>
<reference key="6">
    <citation type="journal article" date="2008" name="Autophagy">
        <title>A specific pathway inducing autophagic cell death is marked by an IP3R mutation.</title>
        <authorList>
            <person name="Lam D."/>
            <person name="Golstein P."/>
        </authorList>
    </citation>
    <scope>FUNCTION</scope>
    <scope>DISRUPTION PHENOTYPE</scope>
</reference>
<reference key="7">
    <citation type="journal article" date="2008" name="Cell Calcium">
        <title>A fast Ca2+-induced Ca2+-release mechanism in Dictyostelium discoideum.</title>
        <authorList>
            <person name="Malchow D."/>
            <person name="Lusche D.F."/>
            <person name="De Lozanne A."/>
            <person name="Schlatterer C."/>
        </authorList>
    </citation>
    <scope>FUNCTION</scope>
</reference>
<reference key="8">
    <citation type="journal article" date="2008" name="Cell Calcium">
        <title>Purinergic-mediated Ca2+ influx in Dictyostelium discoideum.</title>
        <authorList>
            <person name="Ludlow M.J."/>
            <person name="Traynor D."/>
            <person name="Fisher P.R."/>
            <person name="Ennion S.J."/>
        </authorList>
    </citation>
    <scope>DISRUPTION PHENOTYPE</scope>
</reference>
<reference key="9">
    <citation type="journal article" date="2008" name="Mol. Biol. Cell">
        <title>The inositol 1,4,5-trisphosphate receptor is required to signal autophagic cell death.</title>
        <authorList>
            <person name="Lam D."/>
            <person name="Kosta A."/>
            <person name="Luciani M.F."/>
            <person name="Golstein P."/>
        </authorList>
    </citation>
    <scope>FUNCTION</scope>
    <scope>DISRUPTION PHENOTYPE</scope>
</reference>
<reference key="10">
    <citation type="journal article" date="2009" name="Biochim. Biophys. Acta">
        <title>Autophagic cell death: Analysis in Dictyostelium.</title>
        <authorList>
            <person name="Giusti C."/>
            <person name="Tresse E."/>
            <person name="Luciani M.-F."/>
            <person name="Golstein P."/>
        </authorList>
    </citation>
    <scope>FUNCTION</scope>
    <scope>DISRUPTION PHENOTYPE</scope>
</reference>
<name>IPLA_DICDI</name>
<evidence type="ECO:0000250" key="1"/>
<evidence type="ECO:0000255" key="2"/>
<evidence type="ECO:0000256" key="3">
    <source>
        <dbReference type="SAM" id="MobiDB-lite"/>
    </source>
</evidence>
<evidence type="ECO:0000269" key="4">
    <source>
    </source>
</evidence>
<evidence type="ECO:0000269" key="5">
    <source>
    </source>
</evidence>
<evidence type="ECO:0000269" key="6">
    <source>
    </source>
</evidence>
<evidence type="ECO:0000269" key="7">
    <source>
    </source>
</evidence>
<evidence type="ECO:0000269" key="8">
    <source>
    </source>
</evidence>
<evidence type="ECO:0000269" key="9">
    <source>
    </source>
</evidence>
<evidence type="ECO:0000269" key="10">
    <source>
    </source>
</evidence>
<evidence type="ECO:0000269" key="11">
    <source>
    </source>
</evidence>
<evidence type="ECO:0000269" key="12">
    <source>
    </source>
</evidence>
<evidence type="ECO:0000305" key="13"/>
<organism>
    <name type="scientific">Dictyostelium discoideum</name>
    <name type="common">Social amoeba</name>
    <dbReference type="NCBI Taxonomy" id="44689"/>
    <lineage>
        <taxon>Eukaryota</taxon>
        <taxon>Amoebozoa</taxon>
        <taxon>Evosea</taxon>
        <taxon>Eumycetozoa</taxon>
        <taxon>Dictyostelia</taxon>
        <taxon>Dictyosteliales</taxon>
        <taxon>Dictyosteliaceae</taxon>
        <taxon>Dictyostelium</taxon>
    </lineage>
</organism>
<gene>
    <name type="primary">iplA</name>
    <name type="ORF">DDB_G0292564</name>
</gene>
<keyword id="KW-0106">Calcium</keyword>
<keyword id="KW-0107">Calcium channel</keyword>
<keyword id="KW-0109">Calcium transport</keyword>
<keyword id="KW-0175">Coiled coil</keyword>
<keyword id="KW-0256">Endoplasmic reticulum</keyword>
<keyword id="KW-0325">Glycoprotein</keyword>
<keyword id="KW-0407">Ion channel</keyword>
<keyword id="KW-0406">Ion transport</keyword>
<keyword id="KW-1071">Ligand-gated ion channel</keyword>
<keyword id="KW-0472">Membrane</keyword>
<keyword id="KW-0675">Receptor</keyword>
<keyword id="KW-1185">Reference proteome</keyword>
<keyword id="KW-0812">Transmembrane</keyword>
<keyword id="KW-1133">Transmembrane helix</keyword>
<keyword id="KW-0813">Transport</keyword>
<feature type="chain" id="PRO_0000384448" description="Inositol 1,4,5-trisphosphate receptor-like protein A">
    <location>
        <begin position="1"/>
        <end position="3177"/>
    </location>
</feature>
<feature type="topological domain" description="Cytoplasmic" evidence="2">
    <location>
        <begin position="1"/>
        <end position="1175"/>
    </location>
</feature>
<feature type="transmembrane region" description="Helical" evidence="2">
    <location>
        <begin position="1176"/>
        <end position="1196"/>
    </location>
</feature>
<feature type="topological domain" description="Lumenal" evidence="2">
    <location>
        <begin position="1197"/>
        <end position="2723"/>
    </location>
</feature>
<feature type="transmembrane region" description="Helical" evidence="2">
    <location>
        <begin position="2724"/>
        <end position="2744"/>
    </location>
</feature>
<feature type="topological domain" description="Cytoplasmic" evidence="2">
    <location>
        <begin position="2745"/>
        <end position="2769"/>
    </location>
</feature>
<feature type="transmembrane region" description="Helical" evidence="2">
    <location>
        <begin position="2770"/>
        <end position="2790"/>
    </location>
</feature>
<feature type="topological domain" description="Lumenal" evidence="2">
    <location>
        <begin position="2791"/>
        <end position="2853"/>
    </location>
</feature>
<feature type="transmembrane region" description="Helical" evidence="2">
    <location>
        <begin position="2854"/>
        <end position="2874"/>
    </location>
</feature>
<feature type="topological domain" description="Cytoplasmic" evidence="2">
    <location>
        <begin position="2875"/>
        <end position="2896"/>
    </location>
</feature>
<feature type="transmembrane region" description="Helical" evidence="2">
    <location>
        <begin position="2897"/>
        <end position="2917"/>
    </location>
</feature>
<feature type="topological domain" description="Lumenal" evidence="2">
    <location>
        <begin position="2918"/>
        <end position="2995"/>
    </location>
</feature>
<feature type="transmembrane region" description="Helical" evidence="2">
    <location>
        <begin position="2996"/>
        <end position="3016"/>
    </location>
</feature>
<feature type="topological domain" description="Cytoplasmic" evidence="2">
    <location>
        <begin position="3017"/>
        <end position="3177"/>
    </location>
</feature>
<feature type="region of interest" description="Disordered" evidence="3">
    <location>
        <begin position="62"/>
        <end position="125"/>
    </location>
</feature>
<feature type="region of interest" description="Disordered" evidence="3">
    <location>
        <begin position="329"/>
        <end position="405"/>
    </location>
</feature>
<feature type="region of interest" description="Disordered" evidence="3">
    <location>
        <begin position="570"/>
        <end position="609"/>
    </location>
</feature>
<feature type="region of interest" description="Disordered" evidence="3">
    <location>
        <begin position="947"/>
        <end position="983"/>
    </location>
</feature>
<feature type="region of interest" description="Disordered" evidence="3">
    <location>
        <begin position="1009"/>
        <end position="1049"/>
    </location>
</feature>
<feature type="region of interest" description="Disordered" evidence="3">
    <location>
        <begin position="1063"/>
        <end position="1121"/>
    </location>
</feature>
<feature type="region of interest" description="Disordered" evidence="3">
    <location>
        <begin position="1443"/>
        <end position="1490"/>
    </location>
</feature>
<feature type="region of interest" description="Disordered" evidence="3">
    <location>
        <begin position="1715"/>
        <end position="1751"/>
    </location>
</feature>
<feature type="region of interest" description="Disordered" evidence="3">
    <location>
        <begin position="2050"/>
        <end position="2069"/>
    </location>
</feature>
<feature type="region of interest" description="Disordered" evidence="3">
    <location>
        <begin position="2125"/>
        <end position="2188"/>
    </location>
</feature>
<feature type="coiled-coil region" evidence="2">
    <location>
        <begin position="3118"/>
        <end position="3177"/>
    </location>
</feature>
<feature type="compositionally biased region" description="Low complexity" evidence="3">
    <location>
        <begin position="79"/>
        <end position="125"/>
    </location>
</feature>
<feature type="compositionally biased region" description="Low complexity" evidence="3">
    <location>
        <begin position="329"/>
        <end position="341"/>
    </location>
</feature>
<feature type="compositionally biased region" description="Low complexity" evidence="3">
    <location>
        <begin position="351"/>
        <end position="405"/>
    </location>
</feature>
<feature type="compositionally biased region" description="Low complexity" evidence="3">
    <location>
        <begin position="570"/>
        <end position="608"/>
    </location>
</feature>
<feature type="compositionally biased region" description="Low complexity" evidence="3">
    <location>
        <begin position="947"/>
        <end position="963"/>
    </location>
</feature>
<feature type="compositionally biased region" description="Gly residues" evidence="3">
    <location>
        <begin position="964"/>
        <end position="973"/>
    </location>
</feature>
<feature type="compositionally biased region" description="Low complexity" evidence="3">
    <location>
        <begin position="1066"/>
        <end position="1081"/>
    </location>
</feature>
<feature type="compositionally biased region" description="Polar residues" evidence="3">
    <location>
        <begin position="1082"/>
        <end position="1106"/>
    </location>
</feature>
<feature type="compositionally biased region" description="Low complexity" evidence="3">
    <location>
        <begin position="1107"/>
        <end position="1119"/>
    </location>
</feature>
<feature type="compositionally biased region" description="Low complexity" evidence="3">
    <location>
        <begin position="1443"/>
        <end position="1458"/>
    </location>
</feature>
<feature type="compositionally biased region" description="Polar residues" evidence="3">
    <location>
        <begin position="1459"/>
        <end position="1475"/>
    </location>
</feature>
<feature type="compositionally biased region" description="Low complexity" evidence="3">
    <location>
        <begin position="1476"/>
        <end position="1490"/>
    </location>
</feature>
<feature type="compositionally biased region" description="Low complexity" evidence="3">
    <location>
        <begin position="1715"/>
        <end position="1739"/>
    </location>
</feature>
<feature type="compositionally biased region" description="Basic and acidic residues" evidence="3">
    <location>
        <begin position="2050"/>
        <end position="2061"/>
    </location>
</feature>
<feature type="compositionally biased region" description="Low complexity" evidence="3">
    <location>
        <begin position="2125"/>
        <end position="2136"/>
    </location>
</feature>
<feature type="compositionally biased region" description="Gly residues" evidence="3">
    <location>
        <begin position="2137"/>
        <end position="2146"/>
    </location>
</feature>
<feature type="compositionally biased region" description="Low complexity" evidence="3">
    <location>
        <begin position="2169"/>
        <end position="2180"/>
    </location>
</feature>
<feature type="binding site" evidence="1">
    <location>
        <begin position="289"/>
        <end position="293"/>
    </location>
    <ligand>
        <name>1D-myo-inositol 1,4,5-trisphosphate</name>
        <dbReference type="ChEBI" id="CHEBI:203600"/>
    </ligand>
</feature>
<feature type="binding site" evidence="1">
    <location>
        <begin position="608"/>
        <end position="611"/>
    </location>
    <ligand>
        <name>1D-myo-inositol 1,4,5-trisphosphate</name>
        <dbReference type="ChEBI" id="CHEBI:203600"/>
    </ligand>
</feature>
<feature type="binding site" evidence="1">
    <location>
        <begin position="692"/>
        <end position="694"/>
    </location>
    <ligand>
        <name>1D-myo-inositol 1,4,5-trisphosphate</name>
        <dbReference type="ChEBI" id="CHEBI:203600"/>
    </ligand>
</feature>
<feature type="glycosylation site" description="N-linked (GlcNAc...) asparagine" evidence="2">
    <location>
        <position position="1275"/>
    </location>
</feature>
<feature type="glycosylation site" description="N-linked (GlcNAc...) asparagine" evidence="2">
    <location>
        <position position="1460"/>
    </location>
</feature>
<feature type="glycosylation site" description="N-linked (GlcNAc...) asparagine" evidence="2">
    <location>
        <position position="1591"/>
    </location>
</feature>
<feature type="glycosylation site" description="N-linked (GlcNAc...) asparagine" evidence="2">
    <location>
        <position position="1662"/>
    </location>
</feature>
<feature type="glycosylation site" description="N-linked (GlcNAc...) asparagine" evidence="2">
    <location>
        <position position="1678"/>
    </location>
</feature>
<feature type="glycosylation site" description="N-linked (GlcNAc...) asparagine" evidence="2">
    <location>
        <position position="1722"/>
    </location>
</feature>
<feature type="glycosylation site" description="N-linked (GlcNAc...) asparagine" evidence="2">
    <location>
        <position position="1725"/>
    </location>
</feature>
<feature type="glycosylation site" description="N-linked (GlcNAc...) asparagine" evidence="2">
    <location>
        <position position="1730"/>
    </location>
</feature>
<feature type="glycosylation site" description="N-linked (GlcNAc...) asparagine" evidence="2">
    <location>
        <position position="1731"/>
    </location>
</feature>
<feature type="glycosylation site" description="N-linked (GlcNAc...) asparagine" evidence="2">
    <location>
        <position position="1736"/>
    </location>
</feature>
<feature type="glycosylation site" description="N-linked (GlcNAc...) asparagine" evidence="2">
    <location>
        <position position="1745"/>
    </location>
</feature>
<feature type="glycosylation site" description="N-linked (GlcNAc...) asparagine" evidence="2">
    <location>
        <position position="1748"/>
    </location>
</feature>
<feature type="glycosylation site" description="N-linked (GlcNAc...) asparagine" evidence="2">
    <location>
        <position position="1768"/>
    </location>
</feature>
<feature type="glycosylation site" description="N-linked (GlcNAc...) asparagine" evidence="2">
    <location>
        <position position="1827"/>
    </location>
</feature>
<feature type="glycosylation site" description="N-linked (GlcNAc...) asparagine" evidence="2">
    <location>
        <position position="1833"/>
    </location>
</feature>
<feature type="glycosylation site" description="N-linked (GlcNAc...) asparagine" evidence="2">
    <location>
        <position position="1967"/>
    </location>
</feature>
<feature type="glycosylation site" description="N-linked (GlcNAc...) asparagine" evidence="2">
    <location>
        <position position="2035"/>
    </location>
</feature>
<feature type="glycosylation site" description="N-linked (GlcNAc...) asparagine" evidence="2">
    <location>
        <position position="2048"/>
    </location>
</feature>
<feature type="glycosylation site" description="N-linked (GlcNAc...) asparagine" evidence="2">
    <location>
        <position position="2057"/>
    </location>
</feature>
<feature type="glycosylation site" description="N-linked (GlcNAc...) asparagine" evidence="2">
    <location>
        <position position="2106"/>
    </location>
</feature>
<feature type="glycosylation site" description="N-linked (GlcNAc...) asparagine" evidence="2">
    <location>
        <position position="2124"/>
    </location>
</feature>
<feature type="glycosylation site" description="N-linked (GlcNAc...) asparagine" evidence="2">
    <location>
        <position position="2170"/>
    </location>
</feature>
<feature type="glycosylation site" description="N-linked (GlcNAc...) asparagine" evidence="2">
    <location>
        <position position="2173"/>
    </location>
</feature>
<feature type="glycosylation site" description="N-linked (GlcNAc...) asparagine" evidence="2">
    <location>
        <position position="2370"/>
    </location>
</feature>
<feature type="glycosylation site" description="N-linked (GlcNAc...) asparagine" evidence="2">
    <location>
        <position position="2377"/>
    </location>
</feature>
<feature type="glycosylation site" description="N-linked (GlcNAc...) asparagine" evidence="2">
    <location>
        <position position="2392"/>
    </location>
</feature>
<feature type="glycosylation site" description="N-linked (GlcNAc...) asparagine" evidence="2">
    <location>
        <position position="2644"/>
    </location>
</feature>
<feature type="glycosylation site" description="N-linked (GlcNAc...) asparagine" evidence="2">
    <location>
        <position position="2967"/>
    </location>
</feature>
<sequence>MEEKNVNLKTGDLVTFFSEQEEEDGYFSKSHDSAVMSNNKSKDCVFKVYPFTQYTARKALKKKAKRKLQQQQADGADANNTNSSSGGGNSNNNNNNNSNSSNNNNSSNNNNNNNNNGTTNANGENVNNEVTDLELKQLEEYQDLEDVSNESTLIQLEGRDLVYGQIVQLYQPSSNQFLFARNNIVGFRQDGSQKCYFKITPRFQNQDGCKVFSEDLVLLRHEKTGLFLNQQNFIIDQGVFGIGLSENGTFWKMAVSDVDGKSGLNILKANEPFRLFHREGGFVKVSNDKTTFTYNTKTPSSINSLFEIEFENNNLISPLLRSQKDLQLQQKDNTDQLQQQQQKDKDKDNPLKQSYGSLSNSNILLQNNNNNNNNNNSNNNNNSNNNSNNSNGNNSNGNNNNNNSNNIFTSNEVHIGQSFWIRLVGTKKYLSLKESSDDSLKDNPLIVVTEDQKYSPSATFSFVKRDKANEDVIFGSFVRIQSLSKQYLHFISDETFHHNGELVGSKKYYKNDDFQIKQIPKSQLEDYGFVLSRINKIQNYLYQSSSNSSSSLMSSINGIGQSSFSSLAGATTTTTNSGGSNNINNNNNNNNNNNNNNNNNNNNNNNNNIDKKRATVQEIKAIIVEFIKFCTQSEVEDPLDREGTPIKTHQKLLSHPSHLSVLLDYLKRLFEPFDPASILFVYRLLKQMAKSNIKNGIIINEHLDQISPPSIRDKTIPLHFGAILYEVYKNNNILLEALTEDKVQEFINVIKQKKEPKYMELLSEICICYGKPIVKNQQYLCDLLLEKNSNLLFKTRVIGGSLEIERQNPAPKWVDITAFALSVDEKTHRYFEQSLALYSNVSKGRNYNGIRLVGQRITHKECLLALKEESLPYSLRGCYINILIHVYMDCHPQHYVPQINYVWNPSIVNNTKTIELLQLYQQYNITGSLHQRNSSIQNPYSTVSNGNISISSNNPISTTNTTTGSGGGGGGSGFMPTVGPSYGQASSPLSNGAIVNSLASTNLNNQTPTSLNLFNLNSPNNTTTTTNNSTNNTTNNNTNNNNNNNNTNSLITSTTHLIQLVSPQQNNNSNNNNNNNILNSIPTSPIVGSTNHGQLSHSGSNQTPLYQQQQQQQQQQQQQNSLSLFREDDIFSTFVNLEIQADKEPSTTTQLLISLLSKSEYFSNFNNGFPTSHRPQLAFFHKILIAVGYAFKFGFFRKKERVLLKRLRYILEFEHEPVNTFKEVDLGRTMGGSRMLEDESVIYVSIKIEIVNILHLMLSFQKKNIMDVFLYDFSNMSQSAFSQPENVKNQLIDRLTTNYQRDGHQDLSLCTVLFKLLKHENNQLSSLSLSLLNRIYKYRSIYAMLWSPIQKLFLLPNELTPTYKESLQKMESLTVTCFAPLTDDSTQESLRSLAFFIHLVTDSDPIKLVKNQKLLHVIGVHKTIIGVLKIGCSLDDLILDQSQPQHSQQQQQQHQQQPINISGSIDESSSTIPPLTTTTTTTTTTTTTTTTTQQSINFKSLLNSKTNSQSIHVAKIFRSCYEFLKVFCRDNRENQKVLFGEIEFLIGHLIRYGNVFGTVETLIEVFKNNIELAINFGNSPYLKLLVKFIINLSIDQLDPMFLRLLSVLILPCNENSVIENQISVTNLFKEYKSKISKLLVPISTMKEVMKDPKLLSKHYNVNSSNVYKLHLALQEILNHSLNDDGAGIGIGTTVIGGSIIGGSITTTAQTNINTITNTPTNNNSNNSNNNNTTNNNGTISHRHSNSTNTTQSVYPRLIRSSAKAQIVNSSVEILPKEFVINLELILLLKACSHGINTPTEVICREFLSMGECFDILIVRSDGNGKENSSLMINETKEYLENNLLFRFKSAYLSFLHEVFFNSDTLKGDLLALQLNHDLWSLIDQFTNQLNHLVTICAMNQMGQLYYVQMARNIIIPMVSVLERFYSQCFYFDKATQIHLTYSGRLMASLMKLYWKDPSLTIPFNQQNTSRYQSSLNMSPTNYDDSDTSEGGYHPILQGLDPEERVNIYSNLVKCLKAMDRSALSPIVPASVSTINISNVIKGCEDVINRTEHPNSRNRTETIDSSNSSPPLILSKSSSIYIDFTRLNNFVKLSKIRGYTEIAMMVNQSLSITPFIISHPNYNSNNSNNGNNNNNNNNGGGGNGNGGTIRSNSYISGGGGGSTTKRRTSRNNSNISDISNSGKGGSTISNRFQNSFSNTFIQQQQIGITNQRHINSGNTNIVTTVTSKSTNFLEILVFQLRNSLYDNDEMKINCIRILSSLLYINKERKPDIQNIMTDLYCHSAVIGLLSSKNIEIQFESLSLLLALLDDSVNVDNPLPNPKVKDDIQSHFSSSPDIQFFRDIYAMIERAKINLRDTKRNIHRIEHVKMGNNTVLGGNLTSKNSIKSSINNGNNSNNNNNRNGRVIDGCETNPYSTEFQLLQNIFRVLQLLCQGTTNIFKKSIRSQPDNYKSYDILKEMCQFLKILETIVNIDSDSIELGLRFFACMKEIVKNTPENQIAVTNVQVCKAVCNILKKTKENDPSKELKELKYLDLKIEVVDFLLHVIDKEDPRVMSKLIPELDYKVIESNTQVISQRSNHETNEKSIKLASMTFRLIKILADNDKSHNIQLEDCLLKCGEHCKSRIGRVELLYQNKLERIYFPIPNYSRRLILEDKEQSKIKNDENLLQENLEEHFINNKISWNKATEKIDAFMDYSEYKLIELEHLHNLKLNSMSYYLVSHTDKFKFLSFFLALIINLLLIIYSINSPPDLKQFKSDISDDYGIASWWAGFLPLTILQTICCILACVGFFLRKGPVLLYQNWVNYLKTHGHKKNFMFYTNDQRMHSLRQTFKYKFIPLNAKFLMTDLKAVYNILAVICSVLGIIYSPYFFAFHIFQFSLNTKALSLVLKAITMNKKTLLVMGVFILQAIYLLSIFSFVWFQEHYKDDDSEYMCGSLLQCFITNLYYGVPSQGQLIQFIKYNFPNNYLNTTDSTGSPTLEPIKTSNTVSARIIGWTVFNVAFYVVISLILLNVILGIIVDTFGQLRDQRAETEDYKSNVCFICSIERETFQKNSIEFKKHIEDDHNKWHYLYFFAYLKERCTNNQMNQLSELECSIADGITNRSYISFFPIEMSMSLQGIENANRKKEESIDQHAKLLDDVEKKITHNISTQFNQSISLLIDEIKNLRQQVSDLKQQQK</sequence>